<accession>Q5RFA0</accession>
<keyword id="KW-0539">Nucleus</keyword>
<keyword id="KW-1185">Reference proteome</keyword>
<keyword id="KW-0678">Repressor</keyword>
<keyword id="KW-0694">RNA-binding</keyword>
<keyword id="KW-0804">Transcription</keyword>
<keyword id="KW-0805">Transcription regulation</keyword>
<reference key="1">
    <citation type="submission" date="2004-11" db="EMBL/GenBank/DDBJ databases">
        <authorList>
            <consortium name="The German cDNA consortium"/>
        </authorList>
    </citation>
    <scope>NUCLEOTIDE SEQUENCE [LARGE SCALE MRNA]</scope>
    <source>
        <tissue>Kidney</tissue>
    </source>
</reference>
<feature type="chain" id="PRO_0000312640" description="Negative elongation factor D">
    <location>
        <begin position="1"/>
        <end position="590"/>
    </location>
</feature>
<feature type="region of interest" description="Disordered" evidence="3">
    <location>
        <begin position="15"/>
        <end position="43"/>
    </location>
</feature>
<feature type="compositionally biased region" description="Acidic residues" evidence="3">
    <location>
        <begin position="21"/>
        <end position="43"/>
    </location>
</feature>
<gene>
    <name type="primary">NELFCD</name>
    <name type="synonym">NELFD</name>
    <name type="synonym">TH1L</name>
</gene>
<dbReference type="EMBL" id="CR857261">
    <property type="protein sequence ID" value="CAH89557.1"/>
    <property type="molecule type" value="mRNA"/>
</dbReference>
<dbReference type="RefSeq" id="NP_001124679.1">
    <property type="nucleotide sequence ID" value="NM_001131207.2"/>
</dbReference>
<dbReference type="SMR" id="Q5RFA0"/>
<dbReference type="FunCoup" id="Q5RFA0">
    <property type="interactions" value="3771"/>
</dbReference>
<dbReference type="STRING" id="9601.ENSPPYP00000012488"/>
<dbReference type="GeneID" id="100171526"/>
<dbReference type="KEGG" id="pon:100171526"/>
<dbReference type="CTD" id="51497"/>
<dbReference type="eggNOG" id="ENOG502QPUE">
    <property type="taxonomic scope" value="Eukaryota"/>
</dbReference>
<dbReference type="InParanoid" id="Q5RFA0"/>
<dbReference type="OrthoDB" id="511287at2759"/>
<dbReference type="Proteomes" id="UP000001595">
    <property type="component" value="Unplaced"/>
</dbReference>
<dbReference type="GO" id="GO:0032021">
    <property type="term" value="C:NELF complex"/>
    <property type="evidence" value="ECO:0007669"/>
    <property type="project" value="TreeGrafter"/>
</dbReference>
<dbReference type="GO" id="GO:0003723">
    <property type="term" value="F:RNA binding"/>
    <property type="evidence" value="ECO:0007669"/>
    <property type="project" value="UniProtKB-KW"/>
</dbReference>
<dbReference type="GO" id="GO:0034244">
    <property type="term" value="P:negative regulation of transcription elongation by RNA polymerase II"/>
    <property type="evidence" value="ECO:0007669"/>
    <property type="project" value="TreeGrafter"/>
</dbReference>
<dbReference type="InterPro" id="IPR006942">
    <property type="entry name" value="TH1"/>
</dbReference>
<dbReference type="PANTHER" id="PTHR12144:SF0">
    <property type="entry name" value="NEGATIVE ELONGATION FACTOR C_D"/>
    <property type="match status" value="1"/>
</dbReference>
<dbReference type="PANTHER" id="PTHR12144">
    <property type="entry name" value="NEGATIVE ELONGATION FACTOR D"/>
    <property type="match status" value="1"/>
</dbReference>
<dbReference type="Pfam" id="PF04858">
    <property type="entry name" value="TH1"/>
    <property type="match status" value="1"/>
</dbReference>
<organism>
    <name type="scientific">Pongo abelii</name>
    <name type="common">Sumatran orangutan</name>
    <name type="synonym">Pongo pygmaeus abelii</name>
    <dbReference type="NCBI Taxonomy" id="9601"/>
    <lineage>
        <taxon>Eukaryota</taxon>
        <taxon>Metazoa</taxon>
        <taxon>Chordata</taxon>
        <taxon>Craniata</taxon>
        <taxon>Vertebrata</taxon>
        <taxon>Euteleostomi</taxon>
        <taxon>Mammalia</taxon>
        <taxon>Eutheria</taxon>
        <taxon>Euarchontoglires</taxon>
        <taxon>Primates</taxon>
        <taxon>Haplorrhini</taxon>
        <taxon>Catarrhini</taxon>
        <taxon>Hominidae</taxon>
        <taxon>Pongo</taxon>
    </lineage>
</organism>
<evidence type="ECO:0000250" key="1">
    <source>
        <dbReference type="UniProtKB" id="Q8IXH7"/>
    </source>
</evidence>
<evidence type="ECO:0000250" key="2">
    <source>
        <dbReference type="UniProtKB" id="Q922L6"/>
    </source>
</evidence>
<evidence type="ECO:0000256" key="3">
    <source>
        <dbReference type="SAM" id="MobiDB-lite"/>
    </source>
</evidence>
<evidence type="ECO:0000305" key="4"/>
<proteinExistence type="evidence at transcript level"/>
<comment type="function">
    <text evidence="1">Essential component of the NELF complex, a complex that negatively regulates the elongation of transcription by RNA polymerase II (By similarity). The NELF complex, which acts via an association with the DSIF complex and causes transcriptional pausing, is counteracted by the P-TEFb kinase complex (By similarity).</text>
</comment>
<comment type="subunit">
    <text evidence="1 2">The NELF complex is composed of NELFA, NELFB, NELFCD and NELFE; NELFA and NELFCD form a stable subcomplex that binds primarily through NELFCD to the N-terminus of NELFB (By similarity). Binds RNA which may help to stabilize the NELF complex on nucleic acid (By similarity). In vitro, the NELFA:NELFCD subcomplex binds to ssDNA and ssRNA in a sequence- and structure-dependent manner (By similarity). Interacts with ARAF1 (By similarity). Interacts with PCF11 (By similarity). Interacts with NELFB (By similarity). Interacts with KAT8 (By similarity).</text>
</comment>
<comment type="subcellular location">
    <subcellularLocation>
        <location evidence="1">Nucleus</location>
    </subcellularLocation>
</comment>
<comment type="similarity">
    <text evidence="4">Belongs to the NELF-D family.</text>
</comment>
<protein>
    <recommendedName>
        <fullName>Negative elongation factor D</fullName>
        <shortName>NELF-D</shortName>
    </recommendedName>
    <alternativeName>
        <fullName>TH1-like protein</fullName>
    </alternativeName>
</protein>
<name>NELFD_PONAB</name>
<sequence length="590" mass="66219">MAGAAPGAIMDEDYYGSAAEWGDEADGGQQEDDSGEGEDDAEVQQECLHKFSTRDYIMEPSIFNTLKRYFQAGGSPENVIQLLSENYTAVAQTVNLLAEWLIQTGVEPVQVQETVENHLKSLLIKHFDPRKADSIFTEEGETPAWLEQMIAHTTWRDLFYKLAEAHPDCLMLNFTVKLISDAGYQGEITSVSTACQQLEVFSRVLRTSLATILDGGEENLEKNLPEFAKMVCHGEHTYLFAQAMMSVLAQEEQGGSAVRRIAQEVQRFAQEKGHDASQITLALGTAASYPRACQALGAMLSKGALNPADITVLFKMFTSMDPPPVELIRVPAFLDLFMQSLFKPGARINQDHKHKYIHILAYAASVVETWKKNKRVSINKDELKSTSKAVETVHNLCCNENKGASELVAELSTLYQCIRFPVVAMGVLKWVDWTVSEPRYFQLQTDHTPVHLALLDEISTCHQLLHPQVLQLLVKLFETEHSQLDVMEQLELKKTLLDRMVHLLSRGYVLPVVSYIRKCLEKLDTDISLIRYFVTEVLDVIAPPYTSDFVQLFLPILENDSIAGTIKTEGEHDPVTEFIAHCKSNFIMVN</sequence>